<proteinExistence type="inferred from homology"/>
<keyword id="KW-0066">ATP synthesis</keyword>
<keyword id="KW-0139">CF(1)</keyword>
<keyword id="KW-0150">Chloroplast</keyword>
<keyword id="KW-0375">Hydrogen ion transport</keyword>
<keyword id="KW-0406">Ion transport</keyword>
<keyword id="KW-0472">Membrane</keyword>
<keyword id="KW-0934">Plastid</keyword>
<keyword id="KW-0793">Thylakoid</keyword>
<keyword id="KW-0813">Transport</keyword>
<feature type="chain" id="PRO_0000188255" description="ATP synthase epsilon chain, chloroplastic">
    <location>
        <begin position="1"/>
        <end position="133"/>
    </location>
</feature>
<evidence type="ECO:0000255" key="1">
    <source>
        <dbReference type="HAMAP-Rule" id="MF_00530"/>
    </source>
</evidence>
<reference key="1">
    <citation type="journal article" date="2002" name="Mol. Biol. Evol.">
        <title>The plastid chromosome of Atropa belladonna and its comparison with that of Nicotiana tabacum: the role of RNA editing in generating divergence in the process of plant speciation.</title>
        <authorList>
            <person name="Schmitz-Linneweber C."/>
            <person name="Regel R."/>
            <person name="Du T.G."/>
            <person name="Hupfer H."/>
            <person name="Herrmann R.G."/>
            <person name="Maier R.M."/>
        </authorList>
    </citation>
    <scope>NUCLEOTIDE SEQUENCE [LARGE SCALE GENOMIC DNA]</scope>
    <source>
        <strain>cv. Ab5p(kan)</strain>
    </source>
</reference>
<gene>
    <name evidence="1" type="primary">atpE</name>
</gene>
<organism>
    <name type="scientific">Atropa belladonna</name>
    <name type="common">Belladonna</name>
    <name type="synonym">Deadly nightshade</name>
    <dbReference type="NCBI Taxonomy" id="33113"/>
    <lineage>
        <taxon>Eukaryota</taxon>
        <taxon>Viridiplantae</taxon>
        <taxon>Streptophyta</taxon>
        <taxon>Embryophyta</taxon>
        <taxon>Tracheophyta</taxon>
        <taxon>Spermatophyta</taxon>
        <taxon>Magnoliopsida</taxon>
        <taxon>eudicotyledons</taxon>
        <taxon>Gunneridae</taxon>
        <taxon>Pentapetalae</taxon>
        <taxon>asterids</taxon>
        <taxon>lamiids</taxon>
        <taxon>Solanales</taxon>
        <taxon>Solanaceae</taxon>
        <taxon>Solanoideae</taxon>
        <taxon>Hyoscyameae</taxon>
        <taxon>Atropa</taxon>
    </lineage>
</organism>
<sequence>MTLNLSVLTPNRIVWDSEVEEIVLSTNSGQIGILSNHAPIATAVDIGILRIRLNDQWLTMALMGGFARIGNNEITVLVNDAEKGSDIDPQEAQQTLEIAEANVKKAEGRRQKIEANLALRRARTRVEAINPIS</sequence>
<geneLocation type="chloroplast"/>
<protein>
    <recommendedName>
        <fullName evidence="1">ATP synthase epsilon chain, chloroplastic</fullName>
    </recommendedName>
    <alternativeName>
        <fullName evidence="1">ATP synthase F1 sector epsilon subunit</fullName>
    </alternativeName>
    <alternativeName>
        <fullName evidence="1">F-ATPase epsilon subunit</fullName>
    </alternativeName>
</protein>
<comment type="function">
    <text evidence="1">Produces ATP from ADP in the presence of a proton gradient across the membrane.</text>
</comment>
<comment type="subunit">
    <text evidence="1">F-type ATPases have 2 components, CF(1) - the catalytic core - and CF(0) - the membrane proton channel. CF(1) has five subunits: alpha(3), beta(3), gamma(1), delta(1), epsilon(1). CF(0) has three main subunits: a, b and c.</text>
</comment>
<comment type="subcellular location">
    <subcellularLocation>
        <location evidence="1">Plastid</location>
        <location evidence="1">Chloroplast thylakoid membrane</location>
        <topology evidence="1">Peripheral membrane protein</topology>
    </subcellularLocation>
</comment>
<comment type="similarity">
    <text evidence="1">Belongs to the ATPase epsilon chain family.</text>
</comment>
<name>ATPE_ATRBE</name>
<accession>Q8S8W9</accession>
<dbReference type="EMBL" id="AJ316582">
    <property type="protein sequence ID" value="CAC88050.1"/>
    <property type="molecule type" value="Genomic_DNA"/>
</dbReference>
<dbReference type="RefSeq" id="NP_783238.1">
    <property type="nucleotide sequence ID" value="NC_004561.1"/>
</dbReference>
<dbReference type="SMR" id="Q8S8W9"/>
<dbReference type="GeneID" id="806516"/>
<dbReference type="GO" id="GO:0009535">
    <property type="term" value="C:chloroplast thylakoid membrane"/>
    <property type="evidence" value="ECO:0007669"/>
    <property type="project" value="UniProtKB-SubCell"/>
</dbReference>
<dbReference type="GO" id="GO:0045259">
    <property type="term" value="C:proton-transporting ATP synthase complex"/>
    <property type="evidence" value="ECO:0007669"/>
    <property type="project" value="UniProtKB-KW"/>
</dbReference>
<dbReference type="GO" id="GO:0005524">
    <property type="term" value="F:ATP binding"/>
    <property type="evidence" value="ECO:0007669"/>
    <property type="project" value="UniProtKB-UniRule"/>
</dbReference>
<dbReference type="GO" id="GO:0046933">
    <property type="term" value="F:proton-transporting ATP synthase activity, rotational mechanism"/>
    <property type="evidence" value="ECO:0007669"/>
    <property type="project" value="UniProtKB-UniRule"/>
</dbReference>
<dbReference type="CDD" id="cd12152">
    <property type="entry name" value="F1-ATPase_delta"/>
    <property type="match status" value="1"/>
</dbReference>
<dbReference type="FunFam" id="2.60.15.10:FF:000002">
    <property type="entry name" value="ATP synthase epsilon chain, chloroplastic"/>
    <property type="match status" value="1"/>
</dbReference>
<dbReference type="Gene3D" id="6.10.140.480">
    <property type="match status" value="1"/>
</dbReference>
<dbReference type="Gene3D" id="2.60.15.10">
    <property type="entry name" value="F0F1 ATP synthase delta/epsilon subunit, N-terminal"/>
    <property type="match status" value="1"/>
</dbReference>
<dbReference type="HAMAP" id="MF_00530">
    <property type="entry name" value="ATP_synth_epsil_bac"/>
    <property type="match status" value="1"/>
</dbReference>
<dbReference type="InterPro" id="IPR001469">
    <property type="entry name" value="ATP_synth_F1_dsu/esu"/>
</dbReference>
<dbReference type="InterPro" id="IPR020546">
    <property type="entry name" value="ATP_synth_F1_dsu/esu_N"/>
</dbReference>
<dbReference type="InterPro" id="IPR020547">
    <property type="entry name" value="ATP_synth_F1_esu_C"/>
</dbReference>
<dbReference type="InterPro" id="IPR036771">
    <property type="entry name" value="ATPsynth_dsu/esu_N"/>
</dbReference>
<dbReference type="NCBIfam" id="TIGR01216">
    <property type="entry name" value="ATP_synt_epsi"/>
    <property type="match status" value="1"/>
</dbReference>
<dbReference type="PANTHER" id="PTHR13822">
    <property type="entry name" value="ATP SYNTHASE DELTA/EPSILON CHAIN"/>
    <property type="match status" value="1"/>
</dbReference>
<dbReference type="PANTHER" id="PTHR13822:SF10">
    <property type="entry name" value="ATP SYNTHASE EPSILON CHAIN, CHLOROPLASTIC"/>
    <property type="match status" value="1"/>
</dbReference>
<dbReference type="Pfam" id="PF00401">
    <property type="entry name" value="ATP-synt_DE"/>
    <property type="match status" value="1"/>
</dbReference>
<dbReference type="Pfam" id="PF02823">
    <property type="entry name" value="ATP-synt_DE_N"/>
    <property type="match status" value="1"/>
</dbReference>
<dbReference type="SUPFAM" id="SSF51344">
    <property type="entry name" value="Epsilon subunit of F1F0-ATP synthase N-terminal domain"/>
    <property type="match status" value="1"/>
</dbReference>